<gene>
    <name evidence="1" type="primary">yciB</name>
    <name type="ordered locus">Pnap_1834</name>
</gene>
<evidence type="ECO:0000255" key="1">
    <source>
        <dbReference type="HAMAP-Rule" id="MF_00189"/>
    </source>
</evidence>
<name>YCIB_POLNA</name>
<comment type="function">
    <text evidence="1">Plays a role in cell envelope biogenesis, maintenance of cell envelope integrity and membrane homeostasis.</text>
</comment>
<comment type="subcellular location">
    <subcellularLocation>
        <location evidence="1">Cell inner membrane</location>
        <topology evidence="1">Multi-pass membrane protein</topology>
    </subcellularLocation>
</comment>
<comment type="similarity">
    <text evidence="1">Belongs to the YciB family.</text>
</comment>
<accession>A1VNB6</accession>
<protein>
    <recommendedName>
        <fullName evidence="1">Inner membrane-spanning protein YciB</fullName>
    </recommendedName>
</protein>
<dbReference type="EMBL" id="CP000529">
    <property type="protein sequence ID" value="ABM37144.1"/>
    <property type="molecule type" value="Genomic_DNA"/>
</dbReference>
<dbReference type="RefSeq" id="WP_011801225.1">
    <property type="nucleotide sequence ID" value="NC_008781.1"/>
</dbReference>
<dbReference type="STRING" id="365044.Pnap_1834"/>
<dbReference type="KEGG" id="pna:Pnap_1834"/>
<dbReference type="eggNOG" id="COG2917">
    <property type="taxonomic scope" value="Bacteria"/>
</dbReference>
<dbReference type="HOGENOM" id="CLU_089554_2_0_4"/>
<dbReference type="OrthoDB" id="9788219at2"/>
<dbReference type="Proteomes" id="UP000000644">
    <property type="component" value="Chromosome"/>
</dbReference>
<dbReference type="GO" id="GO:0005886">
    <property type="term" value="C:plasma membrane"/>
    <property type="evidence" value="ECO:0007669"/>
    <property type="project" value="UniProtKB-SubCell"/>
</dbReference>
<dbReference type="HAMAP" id="MF_00189">
    <property type="entry name" value="YciB"/>
    <property type="match status" value="1"/>
</dbReference>
<dbReference type="InterPro" id="IPR006008">
    <property type="entry name" value="YciB"/>
</dbReference>
<dbReference type="NCBIfam" id="NF001325">
    <property type="entry name" value="PRK00259.1-3"/>
    <property type="match status" value="1"/>
</dbReference>
<dbReference type="PANTHER" id="PTHR36917:SF1">
    <property type="entry name" value="INNER MEMBRANE-SPANNING PROTEIN YCIB"/>
    <property type="match status" value="1"/>
</dbReference>
<dbReference type="PANTHER" id="PTHR36917">
    <property type="entry name" value="INTRACELLULAR SEPTATION PROTEIN A-RELATED"/>
    <property type="match status" value="1"/>
</dbReference>
<dbReference type="Pfam" id="PF04279">
    <property type="entry name" value="IspA"/>
    <property type="match status" value="1"/>
</dbReference>
<reference key="1">
    <citation type="journal article" date="2009" name="Environ. Microbiol.">
        <title>The genome of Polaromonas naphthalenivorans strain CJ2, isolated from coal tar-contaminated sediment, reveals physiological and metabolic versatility and evolution through extensive horizontal gene transfer.</title>
        <authorList>
            <person name="Yagi J.M."/>
            <person name="Sims D."/>
            <person name="Brettin T."/>
            <person name="Bruce D."/>
            <person name="Madsen E.L."/>
        </authorList>
    </citation>
    <scope>NUCLEOTIDE SEQUENCE [LARGE SCALE GENOMIC DNA]</scope>
    <source>
        <strain>CJ2</strain>
    </source>
</reference>
<feature type="chain" id="PRO_1000021040" description="Inner membrane-spanning protein YciB">
    <location>
        <begin position="1"/>
        <end position="208"/>
    </location>
</feature>
<feature type="transmembrane region" description="Helical" evidence="1">
    <location>
        <begin position="49"/>
        <end position="69"/>
    </location>
</feature>
<feature type="transmembrane region" description="Helical" evidence="1">
    <location>
        <begin position="78"/>
        <end position="98"/>
    </location>
</feature>
<feature type="transmembrane region" description="Helical" evidence="1">
    <location>
        <begin position="105"/>
        <end position="125"/>
    </location>
</feature>
<feature type="transmembrane region" description="Helical" evidence="1">
    <location>
        <begin position="150"/>
        <end position="170"/>
    </location>
</feature>
<feature type="transmembrane region" description="Helical" evidence="1">
    <location>
        <begin position="178"/>
        <end position="198"/>
    </location>
</feature>
<keyword id="KW-0997">Cell inner membrane</keyword>
<keyword id="KW-1003">Cell membrane</keyword>
<keyword id="KW-0472">Membrane</keyword>
<keyword id="KW-1185">Reference proteome</keyword>
<keyword id="KW-0812">Transmembrane</keyword>
<keyword id="KW-1133">Transmembrane helix</keyword>
<sequence>MKILFDFLPIALFFGMFKYAEGHKDWAAGLATDWLGFMVSGGVVGPAEAPVLLATVVVIVATLAQILWLKARGRKVDTMLWVSLALVTALGSATIYFHSESFIKWKPTVLYWVMGASLLVGELVFKKNGIKSLMGAQMSLPDAVWRKVNFSWVAFFAAMGCLNLWVAFNFPTSTWVNFKLFGGMGLMLVFVLAQAFFLNKHIKPDTTS</sequence>
<proteinExistence type="inferred from homology"/>
<organism>
    <name type="scientific">Polaromonas naphthalenivorans (strain CJ2)</name>
    <dbReference type="NCBI Taxonomy" id="365044"/>
    <lineage>
        <taxon>Bacteria</taxon>
        <taxon>Pseudomonadati</taxon>
        <taxon>Pseudomonadota</taxon>
        <taxon>Betaproteobacteria</taxon>
        <taxon>Burkholderiales</taxon>
        <taxon>Comamonadaceae</taxon>
        <taxon>Polaromonas</taxon>
    </lineage>
</organism>